<organism>
    <name type="scientific">Arabidopsis thaliana</name>
    <name type="common">Mouse-ear cress</name>
    <dbReference type="NCBI Taxonomy" id="3702"/>
    <lineage>
        <taxon>Eukaryota</taxon>
        <taxon>Viridiplantae</taxon>
        <taxon>Streptophyta</taxon>
        <taxon>Embryophyta</taxon>
        <taxon>Tracheophyta</taxon>
        <taxon>Spermatophyta</taxon>
        <taxon>Magnoliopsida</taxon>
        <taxon>eudicotyledons</taxon>
        <taxon>Gunneridae</taxon>
        <taxon>Pentapetalae</taxon>
        <taxon>rosids</taxon>
        <taxon>malvids</taxon>
        <taxon>Brassicales</taxon>
        <taxon>Brassicaceae</taxon>
        <taxon>Camelineae</taxon>
        <taxon>Arabidopsis</taxon>
    </lineage>
</organism>
<sequence>MRRSTTISIASKANKFLNLCLLQKGNPVIVPFISRFWGRTFSTKRSSMNLEEEIDLFCKMIQSRPLPSIVDFSKVLSKIAKSKNYDLVISLFHHMEVCGIGHDLYSYNIVINCLCRCSRFVIALSVVGKMMKFGYEPDVVTVSSLINGFCQGNRVFDAIDLVSKMEEMGFRPDVVIYNTIIDGSCKIGLVNDAVELFDRMERDGVRADAVTYNSLVAGLCCSGRWSDAARLMRDMVMRDIVPNVITFTAVIDVFVKEGKFSEAMKLYEEMTRRCVDPDVFTYNSLINGLCMHGRVDEAKQMLDLMVTKGCLPDVVTYNTLINGFCKSKRVDEGTKLFREMAQRGLVGDTITYNTIIQGYFQAGRPDAAQEIFSRMDSRPNIRTYSILLYGLCMNWRVEKALVLFENMQKSEIELDITTYNIVIHGMCKIGNVEDAWDLFRSLSCKGLKPDVVSYTTMISGFCRKRQWDKSDLLYRKMQEDGLLPL</sequence>
<keyword id="KW-1185">Reference proteome</keyword>
<keyword id="KW-0677">Repeat</keyword>
<gene>
    <name type="ordered locus">At1g62720</name>
    <name type="ORF">F23N19.8</name>
</gene>
<evidence type="ECO:0000305" key="1"/>
<dbReference type="EMBL" id="AC007190">
    <property type="protein sequence ID" value="AAF19537.1"/>
    <property type="molecule type" value="Genomic_DNA"/>
</dbReference>
<dbReference type="EMBL" id="CP002684">
    <property type="protein sequence ID" value="AEE33997.1"/>
    <property type="molecule type" value="Genomic_DNA"/>
</dbReference>
<dbReference type="EMBL" id="AK221583">
    <property type="protein sequence ID" value="BAD95075.1"/>
    <property type="molecule type" value="mRNA"/>
</dbReference>
<dbReference type="EMBL" id="BT012561">
    <property type="protein sequence ID" value="AAS99705.1"/>
    <property type="molecule type" value="mRNA"/>
</dbReference>
<dbReference type="RefSeq" id="NP_176459.2">
    <property type="nucleotide sequence ID" value="NM_104949.2"/>
</dbReference>
<dbReference type="SMR" id="Q9SI78"/>
<dbReference type="FunCoup" id="Q9SI78">
    <property type="interactions" value="7"/>
</dbReference>
<dbReference type="STRING" id="3702.Q9SI78"/>
<dbReference type="PaxDb" id="3702-AT1G62720.1"/>
<dbReference type="EnsemblPlants" id="AT1G62720.1">
    <property type="protein sequence ID" value="AT1G62720.1"/>
    <property type="gene ID" value="AT1G62720"/>
</dbReference>
<dbReference type="GeneID" id="842570"/>
<dbReference type="Gramene" id="AT1G62720.1">
    <property type="protein sequence ID" value="AT1G62720.1"/>
    <property type="gene ID" value="AT1G62720"/>
</dbReference>
<dbReference type="KEGG" id="ath:AT1G62720"/>
<dbReference type="Araport" id="AT1G62720"/>
<dbReference type="TAIR" id="AT1G62720">
    <property type="gene designation" value="NG1"/>
</dbReference>
<dbReference type="eggNOG" id="KOG4197">
    <property type="taxonomic scope" value="Eukaryota"/>
</dbReference>
<dbReference type="HOGENOM" id="CLU_002706_49_0_1"/>
<dbReference type="InParanoid" id="Q9SI78"/>
<dbReference type="OMA" id="YLHCFNI"/>
<dbReference type="PhylomeDB" id="Q9SI78"/>
<dbReference type="PRO" id="PR:Q9SI78"/>
<dbReference type="Proteomes" id="UP000006548">
    <property type="component" value="Chromosome 1"/>
</dbReference>
<dbReference type="ExpressionAtlas" id="Q9SI78">
    <property type="expression patterns" value="baseline and differential"/>
</dbReference>
<dbReference type="GO" id="GO:0005739">
    <property type="term" value="C:mitochondrion"/>
    <property type="evidence" value="ECO:0000314"/>
    <property type="project" value="TAIR"/>
</dbReference>
<dbReference type="GO" id="GO:0009845">
    <property type="term" value="P:seed germination"/>
    <property type="evidence" value="ECO:0000315"/>
    <property type="project" value="TAIR"/>
</dbReference>
<dbReference type="FunFam" id="1.25.40.10:FF:002115">
    <property type="entry name" value="Pentatricopeptide repeat-containing protein At1g62720"/>
    <property type="match status" value="1"/>
</dbReference>
<dbReference type="FunFam" id="1.25.40.10:FF:000558">
    <property type="entry name" value="Pentatricopeptide repeat-containing protein At5g39710"/>
    <property type="match status" value="1"/>
</dbReference>
<dbReference type="Gene3D" id="1.25.40.10">
    <property type="entry name" value="Tetratricopeptide repeat domain"/>
    <property type="match status" value="6"/>
</dbReference>
<dbReference type="InterPro" id="IPR051114">
    <property type="entry name" value="Mito_RNA_Proc_CCM1"/>
</dbReference>
<dbReference type="InterPro" id="IPR002885">
    <property type="entry name" value="Pentatricopeptide_rpt"/>
</dbReference>
<dbReference type="InterPro" id="IPR011990">
    <property type="entry name" value="TPR-like_helical_dom_sf"/>
</dbReference>
<dbReference type="NCBIfam" id="TIGR00756">
    <property type="entry name" value="PPR"/>
    <property type="match status" value="11"/>
</dbReference>
<dbReference type="PANTHER" id="PTHR47934:SF28">
    <property type="entry name" value="OS04G0488500 PROTEIN"/>
    <property type="match status" value="1"/>
</dbReference>
<dbReference type="PANTHER" id="PTHR47934">
    <property type="entry name" value="PENTATRICOPEPTIDE REPEAT-CONTAINING PROTEIN PET309, MITOCHONDRIAL"/>
    <property type="match status" value="1"/>
</dbReference>
<dbReference type="Pfam" id="PF12854">
    <property type="entry name" value="PPR_1"/>
    <property type="match status" value="1"/>
</dbReference>
<dbReference type="Pfam" id="PF13041">
    <property type="entry name" value="PPR_2"/>
    <property type="match status" value="5"/>
</dbReference>
<dbReference type="SUPFAM" id="SSF81901">
    <property type="entry name" value="HCP-like"/>
    <property type="match status" value="1"/>
</dbReference>
<dbReference type="PROSITE" id="PS51375">
    <property type="entry name" value="PPR"/>
    <property type="match status" value="12"/>
</dbReference>
<accession>Q9SI78</accession>
<accession>Q6NKY2</accession>
<protein>
    <recommendedName>
        <fullName>Pentatricopeptide repeat-containing protein At1g62720</fullName>
    </recommendedName>
</protein>
<comment type="similarity">
    <text evidence="1">Belongs to the PPR family. P subfamily.</text>
</comment>
<comment type="online information" name="Pentatricopeptide repeat proteins">
    <link uri="https://ppr.plantenergy.uwa.edu.au"/>
</comment>
<feature type="chain" id="PRO_0000342834" description="Pentatricopeptide repeat-containing protein At1g62720">
    <location>
        <begin position="1"/>
        <end position="485"/>
    </location>
</feature>
<feature type="repeat" description="PPR 1">
    <location>
        <begin position="68"/>
        <end position="102"/>
    </location>
</feature>
<feature type="repeat" description="PPR 2">
    <location>
        <begin position="103"/>
        <end position="137"/>
    </location>
</feature>
<feature type="repeat" description="PPR 3">
    <location>
        <begin position="138"/>
        <end position="172"/>
    </location>
</feature>
<feature type="repeat" description="PPR 4">
    <location>
        <begin position="173"/>
        <end position="207"/>
    </location>
</feature>
<feature type="repeat" description="PPR 5">
    <location>
        <begin position="208"/>
        <end position="242"/>
    </location>
</feature>
<feature type="repeat" description="PPR 6">
    <location>
        <begin position="243"/>
        <end position="277"/>
    </location>
</feature>
<feature type="repeat" description="PPR 7">
    <location>
        <begin position="278"/>
        <end position="312"/>
    </location>
</feature>
<feature type="repeat" description="PPR 8">
    <location>
        <begin position="313"/>
        <end position="347"/>
    </location>
</feature>
<feature type="repeat" description="PPR 9">
    <location>
        <begin position="348"/>
        <end position="378"/>
    </location>
</feature>
<feature type="repeat" description="PPR 10">
    <location>
        <begin position="380"/>
        <end position="414"/>
    </location>
</feature>
<feature type="repeat" description="PPR 11">
    <location>
        <begin position="415"/>
        <end position="449"/>
    </location>
</feature>
<feature type="repeat" description="PPR 12">
    <location>
        <begin position="450"/>
        <end position="484"/>
    </location>
</feature>
<proteinExistence type="evidence at transcript level"/>
<reference key="1">
    <citation type="journal article" date="2000" name="Nature">
        <title>Sequence and analysis of chromosome 1 of the plant Arabidopsis thaliana.</title>
        <authorList>
            <person name="Theologis A."/>
            <person name="Ecker J.R."/>
            <person name="Palm C.J."/>
            <person name="Federspiel N.A."/>
            <person name="Kaul S."/>
            <person name="White O."/>
            <person name="Alonso J."/>
            <person name="Altafi H."/>
            <person name="Araujo R."/>
            <person name="Bowman C.L."/>
            <person name="Brooks S.Y."/>
            <person name="Buehler E."/>
            <person name="Chan A."/>
            <person name="Chao Q."/>
            <person name="Chen H."/>
            <person name="Cheuk R.F."/>
            <person name="Chin C.W."/>
            <person name="Chung M.K."/>
            <person name="Conn L."/>
            <person name="Conway A.B."/>
            <person name="Conway A.R."/>
            <person name="Creasy T.H."/>
            <person name="Dewar K."/>
            <person name="Dunn P."/>
            <person name="Etgu P."/>
            <person name="Feldblyum T.V."/>
            <person name="Feng J.-D."/>
            <person name="Fong B."/>
            <person name="Fujii C.Y."/>
            <person name="Gill J.E."/>
            <person name="Goldsmith A.D."/>
            <person name="Haas B."/>
            <person name="Hansen N.F."/>
            <person name="Hughes B."/>
            <person name="Huizar L."/>
            <person name="Hunter J.L."/>
            <person name="Jenkins J."/>
            <person name="Johnson-Hopson C."/>
            <person name="Khan S."/>
            <person name="Khaykin E."/>
            <person name="Kim C.J."/>
            <person name="Koo H.L."/>
            <person name="Kremenetskaia I."/>
            <person name="Kurtz D.B."/>
            <person name="Kwan A."/>
            <person name="Lam B."/>
            <person name="Langin-Hooper S."/>
            <person name="Lee A."/>
            <person name="Lee J.M."/>
            <person name="Lenz C.A."/>
            <person name="Li J.H."/>
            <person name="Li Y.-P."/>
            <person name="Lin X."/>
            <person name="Liu S.X."/>
            <person name="Liu Z.A."/>
            <person name="Luros J.S."/>
            <person name="Maiti R."/>
            <person name="Marziali A."/>
            <person name="Militscher J."/>
            <person name="Miranda M."/>
            <person name="Nguyen M."/>
            <person name="Nierman W.C."/>
            <person name="Osborne B.I."/>
            <person name="Pai G."/>
            <person name="Peterson J."/>
            <person name="Pham P.K."/>
            <person name="Rizzo M."/>
            <person name="Rooney T."/>
            <person name="Rowley D."/>
            <person name="Sakano H."/>
            <person name="Salzberg S.L."/>
            <person name="Schwartz J.R."/>
            <person name="Shinn P."/>
            <person name="Southwick A.M."/>
            <person name="Sun H."/>
            <person name="Tallon L.J."/>
            <person name="Tambunga G."/>
            <person name="Toriumi M.J."/>
            <person name="Town C.D."/>
            <person name="Utterback T."/>
            <person name="Van Aken S."/>
            <person name="Vaysberg M."/>
            <person name="Vysotskaia V.S."/>
            <person name="Walker M."/>
            <person name="Wu D."/>
            <person name="Yu G."/>
            <person name="Fraser C.M."/>
            <person name="Venter J.C."/>
            <person name="Davis R.W."/>
        </authorList>
    </citation>
    <scope>NUCLEOTIDE SEQUENCE [LARGE SCALE GENOMIC DNA]</scope>
    <source>
        <strain>cv. Columbia</strain>
    </source>
</reference>
<reference key="2">
    <citation type="journal article" date="2017" name="Plant J.">
        <title>Araport11: a complete reannotation of the Arabidopsis thaliana reference genome.</title>
        <authorList>
            <person name="Cheng C.Y."/>
            <person name="Krishnakumar V."/>
            <person name="Chan A.P."/>
            <person name="Thibaud-Nissen F."/>
            <person name="Schobel S."/>
            <person name="Town C.D."/>
        </authorList>
    </citation>
    <scope>GENOME REANNOTATION</scope>
    <source>
        <strain>cv. Columbia</strain>
    </source>
</reference>
<reference key="3">
    <citation type="submission" date="2005-03" db="EMBL/GenBank/DDBJ databases">
        <title>Large-scale analysis of RIKEN Arabidopsis full-length (RAFL) cDNAs.</title>
        <authorList>
            <person name="Totoki Y."/>
            <person name="Seki M."/>
            <person name="Ishida J."/>
            <person name="Nakajima M."/>
            <person name="Enju A."/>
            <person name="Kamiya A."/>
            <person name="Narusaka M."/>
            <person name="Shin-i T."/>
            <person name="Nakagawa M."/>
            <person name="Sakamoto N."/>
            <person name="Oishi K."/>
            <person name="Kohara Y."/>
            <person name="Kobayashi M."/>
            <person name="Toyoda A."/>
            <person name="Sakaki Y."/>
            <person name="Sakurai T."/>
            <person name="Iida K."/>
            <person name="Akiyama K."/>
            <person name="Satou M."/>
            <person name="Toyoda T."/>
            <person name="Konagaya A."/>
            <person name="Carninci P."/>
            <person name="Kawai J."/>
            <person name="Hayashizaki Y."/>
            <person name="Shinozaki K."/>
        </authorList>
    </citation>
    <scope>NUCLEOTIDE SEQUENCE [LARGE SCALE MRNA]</scope>
    <source>
        <strain>cv. Columbia</strain>
    </source>
</reference>
<reference key="4">
    <citation type="submission" date="2004-04" db="EMBL/GenBank/DDBJ databases">
        <title>Arabidopsis ORF clones.</title>
        <authorList>
            <person name="Kim C.J."/>
            <person name="Chen H."/>
            <person name="Cheuk R.F."/>
            <person name="Shinn P."/>
            <person name="Carninci P."/>
            <person name="Hayashizaki Y."/>
            <person name="Ishida J."/>
            <person name="Kamiya A."/>
            <person name="Kawai J."/>
            <person name="Narusaka M."/>
            <person name="Sakurai T."/>
            <person name="Satou M."/>
            <person name="Seki M."/>
            <person name="Shinozaki K."/>
            <person name="Ecker J.R."/>
        </authorList>
    </citation>
    <scope>NUCLEOTIDE SEQUENCE [LARGE SCALE MRNA] OF 60-485</scope>
    <source>
        <strain>cv. Columbia</strain>
    </source>
</reference>
<reference key="5">
    <citation type="journal article" date="2004" name="Plant Cell">
        <title>Genome-wide analysis of Arabidopsis pentatricopeptide repeat proteins reveals their essential role in organelle biogenesis.</title>
        <authorList>
            <person name="Lurin C."/>
            <person name="Andres C."/>
            <person name="Aubourg S."/>
            <person name="Bellaoui M."/>
            <person name="Bitton F."/>
            <person name="Bruyere C."/>
            <person name="Caboche M."/>
            <person name="Debast C."/>
            <person name="Gualberto J."/>
            <person name="Hoffmann B."/>
            <person name="Lecharny A."/>
            <person name="Le Ret M."/>
            <person name="Martin-Magniette M.-L."/>
            <person name="Mireau H."/>
            <person name="Peeters N."/>
            <person name="Renou J.-P."/>
            <person name="Szurek B."/>
            <person name="Taconnat L."/>
            <person name="Small I."/>
        </authorList>
    </citation>
    <scope>GENE FAMILY</scope>
</reference>
<name>PPR93_ARATH</name>